<name>RL9_MANSM</name>
<gene>
    <name evidence="1" type="primary">rplI</name>
    <name type="ordered locus">MS0472</name>
</gene>
<comment type="function">
    <text evidence="1">Binds to the 23S rRNA.</text>
</comment>
<comment type="similarity">
    <text evidence="1">Belongs to the bacterial ribosomal protein bL9 family.</text>
</comment>
<sequence>MQVILLDKIVHLGNVGDQVNVKSGFARNFLIPQGKAVMATKANIEHFEARRAEIEAKVAAELAAAQARAAQIAALEAVTISSKAGDEGRLFGSITTREIAEAVTAAGVEVAKSEVRLSTGPIRTLGDHEVKFQLHGEVFTALNVIVVAE</sequence>
<accession>Q65VD1</accession>
<keyword id="KW-0687">Ribonucleoprotein</keyword>
<keyword id="KW-0689">Ribosomal protein</keyword>
<keyword id="KW-0694">RNA-binding</keyword>
<keyword id="KW-0699">rRNA-binding</keyword>
<reference key="1">
    <citation type="journal article" date="2004" name="Nat. Biotechnol.">
        <title>The genome sequence of the capnophilic rumen bacterium Mannheimia succiniciproducens.</title>
        <authorList>
            <person name="Hong S.H."/>
            <person name="Kim J.S."/>
            <person name="Lee S.Y."/>
            <person name="In Y.H."/>
            <person name="Choi S.S."/>
            <person name="Rih J.-K."/>
            <person name="Kim C.H."/>
            <person name="Jeong H."/>
            <person name="Hur C.G."/>
            <person name="Kim J.J."/>
        </authorList>
    </citation>
    <scope>NUCLEOTIDE SEQUENCE [LARGE SCALE GENOMIC DNA]</scope>
    <source>
        <strain>KCTC 0769BP / MBEL55E</strain>
    </source>
</reference>
<dbReference type="EMBL" id="AE016827">
    <property type="protein sequence ID" value="AAU37079.1"/>
    <property type="molecule type" value="Genomic_DNA"/>
</dbReference>
<dbReference type="RefSeq" id="WP_011199653.1">
    <property type="nucleotide sequence ID" value="NC_006300.1"/>
</dbReference>
<dbReference type="SMR" id="Q65VD1"/>
<dbReference type="STRING" id="221988.MS0472"/>
<dbReference type="KEGG" id="msu:MS0472"/>
<dbReference type="eggNOG" id="COG0359">
    <property type="taxonomic scope" value="Bacteria"/>
</dbReference>
<dbReference type="HOGENOM" id="CLU_078938_4_1_6"/>
<dbReference type="OrthoDB" id="9788336at2"/>
<dbReference type="Proteomes" id="UP000000607">
    <property type="component" value="Chromosome"/>
</dbReference>
<dbReference type="GO" id="GO:1990904">
    <property type="term" value="C:ribonucleoprotein complex"/>
    <property type="evidence" value="ECO:0007669"/>
    <property type="project" value="UniProtKB-KW"/>
</dbReference>
<dbReference type="GO" id="GO:0005840">
    <property type="term" value="C:ribosome"/>
    <property type="evidence" value="ECO:0007669"/>
    <property type="project" value="UniProtKB-KW"/>
</dbReference>
<dbReference type="GO" id="GO:0019843">
    <property type="term" value="F:rRNA binding"/>
    <property type="evidence" value="ECO:0007669"/>
    <property type="project" value="UniProtKB-UniRule"/>
</dbReference>
<dbReference type="GO" id="GO:0003735">
    <property type="term" value="F:structural constituent of ribosome"/>
    <property type="evidence" value="ECO:0007669"/>
    <property type="project" value="InterPro"/>
</dbReference>
<dbReference type="GO" id="GO:0006412">
    <property type="term" value="P:translation"/>
    <property type="evidence" value="ECO:0007669"/>
    <property type="project" value="UniProtKB-UniRule"/>
</dbReference>
<dbReference type="FunFam" id="3.10.430.100:FF:000001">
    <property type="entry name" value="50S ribosomal protein L9"/>
    <property type="match status" value="1"/>
</dbReference>
<dbReference type="FunFam" id="3.40.5.10:FF:000001">
    <property type="entry name" value="50S ribosomal protein L9"/>
    <property type="match status" value="1"/>
</dbReference>
<dbReference type="Gene3D" id="3.10.430.100">
    <property type="entry name" value="Ribosomal protein L9, C-terminal domain"/>
    <property type="match status" value="1"/>
</dbReference>
<dbReference type="Gene3D" id="3.40.5.10">
    <property type="entry name" value="Ribosomal protein L9, N-terminal domain"/>
    <property type="match status" value="1"/>
</dbReference>
<dbReference type="HAMAP" id="MF_00503">
    <property type="entry name" value="Ribosomal_bL9"/>
    <property type="match status" value="1"/>
</dbReference>
<dbReference type="InterPro" id="IPR000244">
    <property type="entry name" value="Ribosomal_bL9"/>
</dbReference>
<dbReference type="InterPro" id="IPR009027">
    <property type="entry name" value="Ribosomal_bL9/RNase_H1_N"/>
</dbReference>
<dbReference type="InterPro" id="IPR020594">
    <property type="entry name" value="Ribosomal_bL9_bac/chp"/>
</dbReference>
<dbReference type="InterPro" id="IPR020069">
    <property type="entry name" value="Ribosomal_bL9_C"/>
</dbReference>
<dbReference type="InterPro" id="IPR036791">
    <property type="entry name" value="Ribosomal_bL9_C_sf"/>
</dbReference>
<dbReference type="InterPro" id="IPR020070">
    <property type="entry name" value="Ribosomal_bL9_N"/>
</dbReference>
<dbReference type="InterPro" id="IPR036935">
    <property type="entry name" value="Ribosomal_bL9_N_sf"/>
</dbReference>
<dbReference type="NCBIfam" id="TIGR00158">
    <property type="entry name" value="L9"/>
    <property type="match status" value="1"/>
</dbReference>
<dbReference type="PANTHER" id="PTHR21368">
    <property type="entry name" value="50S RIBOSOMAL PROTEIN L9"/>
    <property type="match status" value="1"/>
</dbReference>
<dbReference type="Pfam" id="PF03948">
    <property type="entry name" value="Ribosomal_L9_C"/>
    <property type="match status" value="1"/>
</dbReference>
<dbReference type="Pfam" id="PF01281">
    <property type="entry name" value="Ribosomal_L9_N"/>
    <property type="match status" value="1"/>
</dbReference>
<dbReference type="SUPFAM" id="SSF55658">
    <property type="entry name" value="L9 N-domain-like"/>
    <property type="match status" value="1"/>
</dbReference>
<dbReference type="SUPFAM" id="SSF55653">
    <property type="entry name" value="Ribosomal protein L9 C-domain"/>
    <property type="match status" value="1"/>
</dbReference>
<dbReference type="PROSITE" id="PS00651">
    <property type="entry name" value="RIBOSOMAL_L9"/>
    <property type="match status" value="1"/>
</dbReference>
<protein>
    <recommendedName>
        <fullName evidence="1">Large ribosomal subunit protein bL9</fullName>
    </recommendedName>
    <alternativeName>
        <fullName evidence="2">50S ribosomal protein L9</fullName>
    </alternativeName>
</protein>
<feature type="chain" id="PRO_0000236541" description="Large ribosomal subunit protein bL9">
    <location>
        <begin position="1"/>
        <end position="149"/>
    </location>
</feature>
<proteinExistence type="inferred from homology"/>
<evidence type="ECO:0000255" key="1">
    <source>
        <dbReference type="HAMAP-Rule" id="MF_00503"/>
    </source>
</evidence>
<evidence type="ECO:0000305" key="2"/>
<organism>
    <name type="scientific">Mannheimia succiniciproducens (strain KCTC 0769BP / MBEL55E)</name>
    <dbReference type="NCBI Taxonomy" id="221988"/>
    <lineage>
        <taxon>Bacteria</taxon>
        <taxon>Pseudomonadati</taxon>
        <taxon>Pseudomonadota</taxon>
        <taxon>Gammaproteobacteria</taxon>
        <taxon>Pasteurellales</taxon>
        <taxon>Pasteurellaceae</taxon>
        <taxon>Basfia</taxon>
    </lineage>
</organism>